<name>RSPH1_CYPCA</name>
<reference key="1">
    <citation type="journal article" date="2004" name="Biol. Reprod.">
        <title>MSAP, the meichroacidin homolog of carp (Cyprinus carpio), differs from the rodent counterpart in germline expression and involves flagellar differentiation.</title>
        <authorList>
            <person name="Ju T.-K."/>
            <person name="Huang F.-L."/>
        </authorList>
    </citation>
    <scope>NUCLEOTIDE SEQUENCE [MRNA]</scope>
    <scope>FUNCTION</scope>
    <scope>SUBCELLULAR LOCATION</scope>
    <scope>TISSUE SPECIFICITY</scope>
    <scope>DEVELOPMENTAL STAGE</scope>
    <scope>INTERACTION WITH SPT7</scope>
    <source>
        <tissue>Sperm</tissue>
    </source>
</reference>
<protein>
    <recommendedName>
        <fullName>Radial spoke head 1 homolog</fullName>
    </recommendedName>
    <alternativeName>
        <fullName>Meichroacidin homolog</fullName>
    </alternativeName>
    <alternativeName>
        <fullName>Meichroacidin-like sperm-specific axonemal protein</fullName>
    </alternativeName>
    <alternativeName>
        <fullName>Testis-specific gene A2-like protein</fullName>
    </alternativeName>
</protein>
<dbReference type="EMBL" id="AY327474">
    <property type="protein sequence ID" value="AAQ95992.1"/>
    <property type="molecule type" value="mRNA"/>
</dbReference>
<dbReference type="SMR" id="Q6VTH5"/>
<dbReference type="Proteomes" id="UP000694384">
    <property type="component" value="Unplaced"/>
</dbReference>
<dbReference type="Proteomes" id="UP000694427">
    <property type="component" value="Unplaced"/>
</dbReference>
<dbReference type="Proteomes" id="UP000694700">
    <property type="component" value="Unplaced"/>
</dbReference>
<dbReference type="Proteomes" id="UP000694701">
    <property type="component" value="Unplaced"/>
</dbReference>
<dbReference type="Proteomes" id="UP001155660">
    <property type="component" value="Unplaced"/>
</dbReference>
<dbReference type="GO" id="GO:0097729">
    <property type="term" value="C:9+2 motile cilium"/>
    <property type="evidence" value="ECO:0000250"/>
    <property type="project" value="UniProtKB"/>
</dbReference>
<dbReference type="GO" id="GO:0005634">
    <property type="term" value="C:nucleus"/>
    <property type="evidence" value="ECO:0007669"/>
    <property type="project" value="TreeGrafter"/>
</dbReference>
<dbReference type="GO" id="GO:0001535">
    <property type="term" value="C:radial spoke head"/>
    <property type="evidence" value="ECO:0000250"/>
    <property type="project" value="UniProtKB"/>
</dbReference>
<dbReference type="GO" id="GO:0036126">
    <property type="term" value="C:sperm flagellum"/>
    <property type="evidence" value="ECO:0000250"/>
    <property type="project" value="UniProtKB"/>
</dbReference>
<dbReference type="GO" id="GO:0035082">
    <property type="term" value="P:axoneme assembly"/>
    <property type="evidence" value="ECO:0007669"/>
    <property type="project" value="TreeGrafter"/>
</dbReference>
<dbReference type="GO" id="GO:0051321">
    <property type="term" value="P:meiotic cell cycle"/>
    <property type="evidence" value="ECO:0007669"/>
    <property type="project" value="UniProtKB-KW"/>
</dbReference>
<dbReference type="GO" id="GO:0007286">
    <property type="term" value="P:spermatid development"/>
    <property type="evidence" value="ECO:0007669"/>
    <property type="project" value="TreeGrafter"/>
</dbReference>
<dbReference type="FunFam" id="2.20.110.10:FF:000010">
    <property type="entry name" value="Radial spoke head 1 homolog"/>
    <property type="match status" value="1"/>
</dbReference>
<dbReference type="Gene3D" id="2.20.110.10">
    <property type="entry name" value="Histone H3 K4-specific methyltransferase SET7/9 N-terminal domain"/>
    <property type="match status" value="3"/>
</dbReference>
<dbReference type="InterPro" id="IPR003409">
    <property type="entry name" value="MORN"/>
</dbReference>
<dbReference type="PANTHER" id="PTHR43215">
    <property type="entry name" value="RADIAL SPOKE HEAD 1 HOMOLOG"/>
    <property type="match status" value="1"/>
</dbReference>
<dbReference type="PANTHER" id="PTHR43215:SF14">
    <property type="entry name" value="RADIAL SPOKE HEAD 1 HOMOLOG"/>
    <property type="match status" value="1"/>
</dbReference>
<dbReference type="Pfam" id="PF02493">
    <property type="entry name" value="MORN"/>
    <property type="match status" value="6"/>
</dbReference>
<dbReference type="SMART" id="SM00698">
    <property type="entry name" value="MORN"/>
    <property type="match status" value="6"/>
</dbReference>
<dbReference type="SUPFAM" id="SSF82185">
    <property type="entry name" value="Histone H3 K4-specific methyltransferase SET7/9 N-terminal domain"/>
    <property type="match status" value="1"/>
</dbReference>
<accession>Q6VTH5</accession>
<gene>
    <name type="primary">rsph1</name>
    <name type="synonym">msap</name>
    <name type="synonym">tsga2</name>
</gene>
<evidence type="ECO:0000250" key="1">
    <source>
        <dbReference type="UniProtKB" id="Q8VIG3"/>
    </source>
</evidence>
<evidence type="ECO:0000256" key="2">
    <source>
        <dbReference type="SAM" id="MobiDB-lite"/>
    </source>
</evidence>
<evidence type="ECO:0000269" key="3">
    <source>
    </source>
</evidence>
<comment type="function">
    <text evidence="3">Functions as part of axonemal radial spoke complexes that play an important part in the motility of sperm and cilia.</text>
</comment>
<comment type="subunit">
    <text evidence="1 3">Component of the axonemal radial spoke complexes (By similarity). Interacts with septin SEPT7 (PubMed:15215198).</text>
</comment>
<comment type="subcellular location">
    <subcellularLocation>
        <location evidence="1">Cytoplasm</location>
        <location evidence="1">Cytoskeleton</location>
        <location evidence="1">Cilium axoneme</location>
    </subcellularLocation>
    <subcellularLocation>
        <location evidence="3">Cytoplasm</location>
        <location evidence="3">Cytoskeleton</location>
        <location evidence="3">Flagellum basal body</location>
    </subcellularLocation>
    <subcellularLocation>
        <location evidence="1">Cytoplasm</location>
        <location evidence="1">Cytoskeleton</location>
        <location evidence="1">Flagellum axoneme</location>
    </subcellularLocation>
    <text evidence="3">Localizes to the basal body and flagellum of mature spermatozoa.</text>
</comment>
<comment type="tissue specificity">
    <text evidence="3">Testis-specific.</text>
</comment>
<comment type="developmental stage">
    <text evidence="3">Expressed during late spermiogenesis and accumulates in mature spermatozoa.</text>
</comment>
<organism>
    <name type="scientific">Cyprinus carpio</name>
    <name type="common">Common carp</name>
    <dbReference type="NCBI Taxonomy" id="7962"/>
    <lineage>
        <taxon>Eukaryota</taxon>
        <taxon>Metazoa</taxon>
        <taxon>Chordata</taxon>
        <taxon>Craniata</taxon>
        <taxon>Vertebrata</taxon>
        <taxon>Euteleostomi</taxon>
        <taxon>Actinopterygii</taxon>
        <taxon>Neopterygii</taxon>
        <taxon>Teleostei</taxon>
        <taxon>Ostariophysi</taxon>
        <taxon>Cypriniformes</taxon>
        <taxon>Cyprinidae</taxon>
        <taxon>Cyprininae</taxon>
        <taxon>Cyprinus</taxon>
    </lineage>
</organism>
<keyword id="KW-0966">Cell projection</keyword>
<keyword id="KW-0969">Cilium</keyword>
<keyword id="KW-0963">Cytoplasm</keyword>
<keyword id="KW-0206">Cytoskeleton</keyword>
<keyword id="KW-0217">Developmental protein</keyword>
<keyword id="KW-0221">Differentiation</keyword>
<keyword id="KW-0282">Flagellum</keyword>
<keyword id="KW-0469">Meiosis</keyword>
<keyword id="KW-1185">Reference proteome</keyword>
<keyword id="KW-0677">Repeat</keyword>
<keyword id="KW-0744">Spermatogenesis</keyword>
<proteinExistence type="evidence at protein level"/>
<sequence>MSDAGTEEFDEEQGSLGEYEGDRNEAGERHGQGKAVLPRGDTYQGAYENGKRCGQGTYKFKNGARYTGEWYMNLKHGQGVLYYPDGSKYEGSWVDDQRQGHGVYTYPNGDTYDGEWLHHQRHGQGTYTHQETGSQYRGTWVVGNMESTGELIQLNHRYHGNFVNNNPSGPGKYVFDIGCEQHGEYFQLEPDKGEAEEDETLISTTLKWKPKAVTGLSV</sequence>
<feature type="chain" id="PRO_0000065661" description="Radial spoke head 1 homolog">
    <location>
        <begin position="1"/>
        <end position="218"/>
    </location>
</feature>
<feature type="repeat" description="MORN 1">
    <location>
        <begin position="19"/>
        <end position="42"/>
    </location>
</feature>
<feature type="repeat" description="MORN 2">
    <location>
        <begin position="43"/>
        <end position="65"/>
    </location>
</feature>
<feature type="repeat" description="MORN 3">
    <location>
        <begin position="66"/>
        <end position="88"/>
    </location>
</feature>
<feature type="repeat" description="MORN 4">
    <location>
        <begin position="89"/>
        <end position="111"/>
    </location>
</feature>
<feature type="repeat" description="MORN 5">
    <location>
        <begin position="112"/>
        <end position="134"/>
    </location>
</feature>
<feature type="repeat" description="MORN 6">
    <location>
        <begin position="158"/>
        <end position="180"/>
    </location>
</feature>
<feature type="region of interest" description="Disordered" evidence="2">
    <location>
        <begin position="1"/>
        <end position="48"/>
    </location>
</feature>
<feature type="compositionally biased region" description="Acidic residues" evidence="2">
    <location>
        <begin position="1"/>
        <end position="13"/>
    </location>
</feature>
<feature type="compositionally biased region" description="Basic and acidic residues" evidence="2">
    <location>
        <begin position="20"/>
        <end position="31"/>
    </location>
</feature>